<feature type="chain" id="PRO_0000074916" description="Phosphotransferase RcsD">
    <location>
        <begin position="1"/>
        <end position="890"/>
    </location>
</feature>
<feature type="topological domain" description="Cytoplasmic" evidence="1">
    <location>
        <begin position="1"/>
        <end position="21"/>
    </location>
</feature>
<feature type="transmembrane region" description="Helical" evidence="2">
    <location>
        <begin position="22"/>
        <end position="42"/>
    </location>
</feature>
<feature type="topological domain" description="Periplasmic" evidence="1">
    <location>
        <begin position="43"/>
        <end position="308"/>
    </location>
</feature>
<feature type="transmembrane region" description="Helical" evidence="2">
    <location>
        <begin position="309"/>
        <end position="329"/>
    </location>
</feature>
<feature type="topological domain" description="Cytoplasmic" evidence="1">
    <location>
        <begin position="330"/>
        <end position="890"/>
    </location>
</feature>
<feature type="domain" description="HPt" evidence="2">
    <location>
        <begin position="803"/>
        <end position="890"/>
    </location>
</feature>
<feature type="region of interest" description="Histidine-like kinase">
    <location>
        <begin position="468"/>
        <end position="678"/>
    </location>
</feature>
<feature type="modified residue" description="Phosphohistidine" evidence="2 4">
    <location>
        <position position="842"/>
    </location>
</feature>
<feature type="mutagenesis site" description="Lack of activity." evidence="4">
    <original>H</original>
    <variation>R</variation>
    <location>
        <position position="842"/>
    </location>
</feature>
<feature type="sequence conflict" description="In Ref. 4; AAA81025." evidence="9" ref="4">
    <original>Q</original>
    <variation>L</variation>
    <location>
        <position position="61"/>
    </location>
</feature>
<feature type="sequence conflict" description="In Ref. 4; AAA81026." evidence="9" ref="4">
    <original>K</original>
    <variation>E</variation>
    <location>
        <position position="164"/>
    </location>
</feature>
<feature type="sequence conflict" description="In Ref. 4; AAA81026." evidence="9" ref="4">
    <original>T</original>
    <variation>A</variation>
    <location>
        <position position="174"/>
    </location>
</feature>
<feature type="sequence conflict" description="In Ref. 4; AAA81026." evidence="9" ref="4">
    <original>S</original>
    <variation>N</variation>
    <location>
        <position position="176"/>
    </location>
</feature>
<feature type="sequence conflict" description="In Ref. 4; AAA81026." evidence="9" ref="4">
    <original>V</original>
    <variation>G</variation>
    <location>
        <position position="179"/>
    </location>
</feature>
<feature type="sequence conflict" description="In Ref. 4; AAA81026." evidence="9" ref="4">
    <original>A</original>
    <variation>T</variation>
    <location>
        <position position="184"/>
    </location>
</feature>
<feature type="sequence conflict" description="In Ref. 4; AAA81026." evidence="9" ref="4">
    <original>T</original>
    <variation>A</variation>
    <location>
        <position position="267"/>
    </location>
</feature>
<feature type="sequence conflict" description="In Ref. 5; M28242." evidence="9" ref="5">
    <original>ES</original>
    <variation>DA</variation>
    <location>
        <begin position="598"/>
        <end position="599"/>
    </location>
</feature>
<feature type="strand" evidence="12">
    <location>
        <begin position="690"/>
        <end position="699"/>
    </location>
</feature>
<feature type="helix" evidence="12">
    <location>
        <begin position="703"/>
        <end position="715"/>
    </location>
</feature>
<feature type="strand" evidence="12">
    <location>
        <begin position="718"/>
        <end position="721"/>
    </location>
</feature>
<feature type="strand" evidence="12">
    <location>
        <begin position="725"/>
        <end position="728"/>
    </location>
</feature>
<feature type="strand" evidence="12">
    <location>
        <begin position="733"/>
        <end position="739"/>
    </location>
</feature>
<feature type="helix" evidence="12">
    <location>
        <begin position="740"/>
        <end position="742"/>
    </location>
</feature>
<feature type="strand" evidence="12">
    <location>
        <begin position="744"/>
        <end position="750"/>
    </location>
</feature>
<feature type="strand" evidence="12">
    <location>
        <begin position="755"/>
        <end position="761"/>
    </location>
</feature>
<feature type="strand" evidence="12">
    <location>
        <begin position="764"/>
        <end position="767"/>
    </location>
</feature>
<feature type="strand" evidence="11">
    <location>
        <begin position="784"/>
        <end position="787"/>
    </location>
</feature>
<feature type="helix" evidence="11">
    <location>
        <begin position="801"/>
        <end position="808"/>
    </location>
</feature>
<feature type="helix" evidence="11">
    <location>
        <begin position="811"/>
        <end position="814"/>
    </location>
</feature>
<feature type="turn" evidence="11">
    <location>
        <begin position="815"/>
        <end position="817"/>
    </location>
</feature>
<feature type="helix" evidence="11">
    <location>
        <begin position="818"/>
        <end position="831"/>
    </location>
</feature>
<feature type="helix" evidence="11">
    <location>
        <begin position="834"/>
        <end position="851"/>
    </location>
</feature>
<feature type="helix" evidence="11">
    <location>
        <begin position="854"/>
        <end position="868"/>
    </location>
</feature>
<feature type="helix" evidence="11">
    <location>
        <begin position="872"/>
        <end position="889"/>
    </location>
</feature>
<organism>
    <name type="scientific">Escherichia coli (strain K12)</name>
    <dbReference type="NCBI Taxonomy" id="83333"/>
    <lineage>
        <taxon>Bacteria</taxon>
        <taxon>Pseudomonadati</taxon>
        <taxon>Pseudomonadota</taxon>
        <taxon>Gammaproteobacteria</taxon>
        <taxon>Enterobacterales</taxon>
        <taxon>Enterobacteriaceae</taxon>
        <taxon>Escherichia</taxon>
    </lineage>
</organism>
<keyword id="KW-0002">3D-structure</keyword>
<keyword id="KW-0067">ATP-binding</keyword>
<keyword id="KW-0997">Cell inner membrane</keyword>
<keyword id="KW-1003">Cell membrane</keyword>
<keyword id="KW-0418">Kinase</keyword>
<keyword id="KW-0472">Membrane</keyword>
<keyword id="KW-0547">Nucleotide-binding</keyword>
<keyword id="KW-0597">Phosphoprotein</keyword>
<keyword id="KW-1185">Reference proteome</keyword>
<keyword id="KW-0808">Transferase</keyword>
<keyword id="KW-0812">Transmembrane</keyword>
<keyword id="KW-1133">Transmembrane helix</keyword>
<keyword id="KW-0902">Two-component regulatory system</keyword>
<sequence length="890" mass="100372">MRQKETTATTRFSLLPGSITRFFLLLIIVLLVTMGVMVQSAVNAWLKDKSYQIVDITHAIQKRVDNWRYVTWQIYDNIAATTSPSSGEGLQETRLKQDVYYLEKPRRKTEALIFGSHDNSTLEMTQRMSTYLDTLWGAENVPWSMYYLNGQDNSLVLISTLPLKDLTSGFKESTVSDIVDSRRAEMLQQANALDERESFSNMRRLAWQNGHYFTLRTTFNQPGHLATVVAFDLPINDLIPPGMPLDSFRLEPDATATGNNDNEKEGTDSVSIHFNSTKIEISSALNSTDMRLVWQVPYGTLLLDTLQNILLPLLLNIGLLALALFGYTTFRHFSSRSTENVPSTAVNNELRILRAINEEIVSLLPLGLLVHDQESNRTVISNKIADHLLPHLNLQNITTMAEQHQGIIQATINNELYEIRMFRSQVAPRTQIFIIRDQDREVLVNKKLKQAQRLYEKNQQGRMIFMKNIGDALKEPAQSLAESAAKLNAPESKQLANQADVLVRLVDEIQLANMLADDSWKSETVLFSVQDLIDEVVPSVLPAIKRKGLQLLINNHLKAHDMRRGDRDALRRILLLLMQYAVTSTQLGKITLEVDQDESSEDRLTFRILDTGEGVSIHEMDNLHFPFINQTQNDRYGKADPLAFWLSDQLARKLGGHLNIKTRDGLGTRYSVHIKMLAADPEVEEEEERLLDDVCVMVDVTSAEIRNIVTRQLENWGATCITPDERLISQDYDIFLTDNPSNLTASGLLLSDDESGVREIGPGQLCVNFNMSNAMQEAVLQLIEVQLAQEEVTESPLGGDENAQLHASGYYALFVDTVPDDVKRLYTEAATSDFAALAQTAHRLKGVFAMLNLVPGKQLCETLEHLIREKDVPGIEKYISDIDSYVKSLL</sequence>
<proteinExistence type="evidence at protein level"/>
<gene>
    <name evidence="2" type="primary">rcsD</name>
    <name type="synonym">yojN</name>
    <name type="synonym">yojP</name>
    <name type="synonym">yojQ</name>
    <name type="ordered locus">b2216</name>
    <name type="ordered locus">JW2204</name>
</gene>
<name>RCSD_ECOLI</name>
<protein>
    <recommendedName>
        <fullName evidence="2">Phosphotransferase RcsD</fullName>
        <ecNumber evidence="2">2.7.2.-</ecNumber>
    </recommendedName>
    <alternativeName>
        <fullName evidence="2">Phosphotransfer intermediate RcsD</fullName>
    </alternativeName>
</protein>
<comment type="function">
    <text evidence="2 3 4 5 6 7">Component of the Rcs signaling system, which controls transcription of numerous genes. RcsD is a phosphotransfer intermediate between the sensor kinase RcsC and the response regulator RcsB. It acquires a phosphoryl group from RcsC and transfers it to RcsB. The system controls expression of genes involved in colanic acid capsule synthesis, biofilm formation and cell division.</text>
</comment>
<comment type="subunit">
    <text evidence="2 8">Interacts with RcsC and RcsB. Has a higher affinity for RcsB than for RcsC.</text>
</comment>
<comment type="interaction">
    <interactant intactId="EBI-556803">
        <id>P39838</id>
    </interactant>
    <interactant intactId="EBI-369670">
        <id>P0DMC7</id>
        <label>rcsB</label>
    </interactant>
    <organismsDiffer>false</organismsDiffer>
    <experiments>5</experiments>
</comment>
<comment type="subcellular location">
    <subcellularLocation>
        <location evidence="10">Cell inner membrane</location>
        <topology evidence="10">Multi-pass membrane protein</topology>
    </subcellularLocation>
</comment>
<comment type="PTM">
    <text evidence="10">Phosphorylated by RcsC.</text>
</comment>
<comment type="similarity">
    <text evidence="2">Belongs to the RcsD family.</text>
</comment>
<comment type="caution">
    <text evidence="10">Contains a histidine kinase domain, but it seems to be non-functional as the highly conserved histidine residue is missing.</text>
</comment>
<comment type="sequence caution" evidence="9">
    <conflict type="frameshift">
        <sequence resource="EMBL-CDS" id="AAA81025"/>
    </conflict>
</comment>
<comment type="sequence caution" evidence="9">
    <conflict type="frameshift">
        <sequence resource="EMBL-CDS" id="AAA81026"/>
    </conflict>
</comment>
<comment type="sequence caution" evidence="9">
    <conflict type="frameshift">
        <sequence resource="EMBL-CDS" id="AAA81027"/>
    </conflict>
</comment>
<comment type="sequence caution" evidence="9">
    <conflict type="frameshift">
        <sequence resource="EMBL" id="M28242"/>
    </conflict>
</comment>
<evidence type="ECO:0000255" key="1"/>
<evidence type="ECO:0000255" key="2">
    <source>
        <dbReference type="HAMAP-Rule" id="MF_00980"/>
    </source>
</evidence>
<evidence type="ECO:0000269" key="3">
    <source>
    </source>
</evidence>
<evidence type="ECO:0000269" key="4">
    <source>
    </source>
</evidence>
<evidence type="ECO:0000269" key="5">
    <source>
    </source>
</evidence>
<evidence type="ECO:0000269" key="6">
    <source>
    </source>
</evidence>
<evidence type="ECO:0000269" key="7">
    <source>
    </source>
</evidence>
<evidence type="ECO:0000269" key="8">
    <source>
    </source>
</evidence>
<evidence type="ECO:0000305" key="9"/>
<evidence type="ECO:0000305" key="10">
    <source>
    </source>
</evidence>
<evidence type="ECO:0007829" key="11">
    <source>
        <dbReference type="PDB" id="1SR2"/>
    </source>
</evidence>
<evidence type="ECO:0007829" key="12">
    <source>
        <dbReference type="PDB" id="2KX7"/>
    </source>
</evidence>
<dbReference type="EC" id="2.7.2.-" evidence="2"/>
<dbReference type="EMBL" id="U00096">
    <property type="protein sequence ID" value="AAC75276.1"/>
    <property type="molecule type" value="Genomic_DNA"/>
</dbReference>
<dbReference type="EMBL" id="AP009048">
    <property type="protein sequence ID" value="BAA15999.1"/>
    <property type="molecule type" value="Genomic_DNA"/>
</dbReference>
<dbReference type="EMBL" id="U38659">
    <property type="protein sequence ID" value="AAA81025.1"/>
    <property type="status" value="ALT_FRAME"/>
    <property type="molecule type" value="Genomic_DNA"/>
</dbReference>
<dbReference type="EMBL" id="U38659">
    <property type="protein sequence ID" value="AAA81026.1"/>
    <property type="status" value="ALT_FRAME"/>
    <property type="molecule type" value="Genomic_DNA"/>
</dbReference>
<dbReference type="EMBL" id="U38659">
    <property type="protein sequence ID" value="AAA81027.1"/>
    <property type="status" value="ALT_FRAME"/>
    <property type="molecule type" value="Genomic_DNA"/>
</dbReference>
<dbReference type="EMBL" id="M28242">
    <property type="status" value="NOT_ANNOTATED_CDS"/>
    <property type="molecule type" value="Genomic_DNA"/>
</dbReference>
<dbReference type="PIR" id="F64991">
    <property type="entry name" value="F64991"/>
</dbReference>
<dbReference type="RefSeq" id="NP_416720.1">
    <property type="nucleotide sequence ID" value="NC_000913.3"/>
</dbReference>
<dbReference type="RefSeq" id="WP_001249081.1">
    <property type="nucleotide sequence ID" value="NZ_LN832404.1"/>
</dbReference>
<dbReference type="PDB" id="1SR2">
    <property type="method" value="NMR"/>
    <property type="chains" value="A=775-890"/>
</dbReference>
<dbReference type="PDB" id="2KX7">
    <property type="method" value="NMR"/>
    <property type="chains" value="A=688-795"/>
</dbReference>
<dbReference type="PDBsum" id="1SR2"/>
<dbReference type="PDBsum" id="2KX7"/>
<dbReference type="BMRB" id="P39838"/>
<dbReference type="SMR" id="P39838"/>
<dbReference type="BioGRID" id="4261921">
    <property type="interactions" value="7"/>
</dbReference>
<dbReference type="BioGRID" id="851058">
    <property type="interactions" value="1"/>
</dbReference>
<dbReference type="DIP" id="DIP-12815N"/>
<dbReference type="FunCoup" id="P39838">
    <property type="interactions" value="221"/>
</dbReference>
<dbReference type="IntAct" id="P39838">
    <property type="interactions" value="4"/>
</dbReference>
<dbReference type="STRING" id="511145.b2216"/>
<dbReference type="iPTMnet" id="P39838"/>
<dbReference type="jPOST" id="P39838"/>
<dbReference type="PaxDb" id="511145-b2216"/>
<dbReference type="EnsemblBacteria" id="AAC75276">
    <property type="protein sequence ID" value="AAC75276"/>
    <property type="gene ID" value="b2216"/>
</dbReference>
<dbReference type="GeneID" id="946717"/>
<dbReference type="KEGG" id="ecj:JW2204"/>
<dbReference type="KEGG" id="eco:b2216"/>
<dbReference type="KEGG" id="ecoc:C3026_12390"/>
<dbReference type="PATRIC" id="fig|1411691.4.peg.19"/>
<dbReference type="EchoBASE" id="EB2286"/>
<dbReference type="eggNOG" id="COG0642">
    <property type="taxonomic scope" value="Bacteria"/>
</dbReference>
<dbReference type="eggNOG" id="COG2198">
    <property type="taxonomic scope" value="Bacteria"/>
</dbReference>
<dbReference type="HOGENOM" id="CLU_009611_0_0_6"/>
<dbReference type="InParanoid" id="P39838"/>
<dbReference type="OMA" id="TWRYATW"/>
<dbReference type="OrthoDB" id="6414457at2"/>
<dbReference type="PhylomeDB" id="P39838"/>
<dbReference type="BioCyc" id="EcoCyc:EG12385-MONOMER"/>
<dbReference type="EvolutionaryTrace" id="P39838"/>
<dbReference type="PRO" id="PR:P39838"/>
<dbReference type="Proteomes" id="UP000000625">
    <property type="component" value="Chromosome"/>
</dbReference>
<dbReference type="GO" id="GO:0005886">
    <property type="term" value="C:plasma membrane"/>
    <property type="evidence" value="ECO:0000314"/>
    <property type="project" value="EcoCyc"/>
</dbReference>
<dbReference type="GO" id="GO:0005524">
    <property type="term" value="F:ATP binding"/>
    <property type="evidence" value="ECO:0007669"/>
    <property type="project" value="UniProtKB-UniRule"/>
</dbReference>
<dbReference type="GO" id="GO:0009927">
    <property type="term" value="F:histidine phosphotransfer kinase activity"/>
    <property type="evidence" value="ECO:0000314"/>
    <property type="project" value="EcoCyc"/>
</dbReference>
<dbReference type="GO" id="GO:0000155">
    <property type="term" value="F:phosphorelay sensor kinase activity"/>
    <property type="evidence" value="ECO:0000318"/>
    <property type="project" value="GO_Central"/>
</dbReference>
<dbReference type="GO" id="GO:0016774">
    <property type="term" value="F:phosphotransferase activity, carboxyl group as acceptor"/>
    <property type="evidence" value="ECO:0007669"/>
    <property type="project" value="UniProtKB-UniRule"/>
</dbReference>
<dbReference type="GO" id="GO:0000160">
    <property type="term" value="P:phosphorelay signal transduction system"/>
    <property type="evidence" value="ECO:0000315"/>
    <property type="project" value="EcoCyc"/>
</dbReference>
<dbReference type="CDD" id="cd00088">
    <property type="entry name" value="HPT"/>
    <property type="match status" value="1"/>
</dbReference>
<dbReference type="FunFam" id="1.20.120.160:FF:000004">
    <property type="entry name" value="Phosphotransferase RcsD"/>
    <property type="match status" value="1"/>
</dbReference>
<dbReference type="FunFam" id="3.30.565.10:FF:000047">
    <property type="entry name" value="Phosphotransferase RcsD"/>
    <property type="match status" value="1"/>
</dbReference>
<dbReference type="FunFam" id="3.40.50.11620:FF:000001">
    <property type="entry name" value="Phosphotransferase RcsD"/>
    <property type="match status" value="1"/>
</dbReference>
<dbReference type="Gene3D" id="3.30.565.10">
    <property type="entry name" value="Histidine kinase-like ATPase, C-terminal domain"/>
    <property type="match status" value="1"/>
</dbReference>
<dbReference type="Gene3D" id="1.20.120.160">
    <property type="entry name" value="HPT domain"/>
    <property type="match status" value="1"/>
</dbReference>
<dbReference type="Gene3D" id="3.40.50.11620">
    <property type="entry name" value="Phosphotransferase RcsD, RcsD-ABL domain"/>
    <property type="match status" value="1"/>
</dbReference>
<dbReference type="HAMAP" id="MF_00980">
    <property type="entry name" value="RcsD"/>
    <property type="match status" value="1"/>
</dbReference>
<dbReference type="InterPro" id="IPR036890">
    <property type="entry name" value="HATPase_C_sf"/>
</dbReference>
<dbReference type="InterPro" id="IPR005467">
    <property type="entry name" value="His_kinase_dom"/>
</dbReference>
<dbReference type="InterPro" id="IPR036641">
    <property type="entry name" value="HPT_dom_sf"/>
</dbReference>
<dbReference type="InterPro" id="IPR030861">
    <property type="entry name" value="Ptransferase_RcsD"/>
</dbReference>
<dbReference type="InterPro" id="IPR032306">
    <property type="entry name" value="RcsD_ABL"/>
</dbReference>
<dbReference type="InterPro" id="IPR038616">
    <property type="entry name" value="RcsD_ABL_sf"/>
</dbReference>
<dbReference type="InterPro" id="IPR008207">
    <property type="entry name" value="Sig_transdc_His_kin_Hpt_dom"/>
</dbReference>
<dbReference type="NCBIfam" id="NF007907">
    <property type="entry name" value="PRK10618.1"/>
    <property type="match status" value="1"/>
</dbReference>
<dbReference type="PANTHER" id="PTHR45339">
    <property type="entry name" value="HYBRID SIGNAL TRANSDUCTION HISTIDINE KINASE J"/>
    <property type="match status" value="1"/>
</dbReference>
<dbReference type="PANTHER" id="PTHR45339:SF1">
    <property type="entry name" value="HYBRID SIGNAL TRANSDUCTION HISTIDINE KINASE J"/>
    <property type="match status" value="1"/>
</dbReference>
<dbReference type="Pfam" id="PF02518">
    <property type="entry name" value="HATPase_c"/>
    <property type="match status" value="1"/>
</dbReference>
<dbReference type="Pfam" id="PF01627">
    <property type="entry name" value="Hpt"/>
    <property type="match status" value="1"/>
</dbReference>
<dbReference type="Pfam" id="PF16359">
    <property type="entry name" value="RcsD_ABL"/>
    <property type="match status" value="1"/>
</dbReference>
<dbReference type="SMART" id="SM00387">
    <property type="entry name" value="HATPase_c"/>
    <property type="match status" value="1"/>
</dbReference>
<dbReference type="SUPFAM" id="SSF55874">
    <property type="entry name" value="ATPase domain of HSP90 chaperone/DNA topoisomerase II/histidine kinase"/>
    <property type="match status" value="1"/>
</dbReference>
<dbReference type="SUPFAM" id="SSF47226">
    <property type="entry name" value="Histidine-containing phosphotransfer domain, HPT domain"/>
    <property type="match status" value="1"/>
</dbReference>
<dbReference type="PROSITE" id="PS50109">
    <property type="entry name" value="HIS_KIN"/>
    <property type="match status" value="1"/>
</dbReference>
<dbReference type="PROSITE" id="PS50894">
    <property type="entry name" value="HPT"/>
    <property type="match status" value="1"/>
</dbReference>
<accession>P39838</accession>
<accession>P47725</accession>
<accession>P47726</accession>
<accession>P76456</accession>
<reference key="1">
    <citation type="journal article" date="1996" name="DNA Res.">
        <title>A 460-kb DNA sequence of the Escherichia coli K-12 genome corresponding to the 40.1-50.0 min region on the linkage map.</title>
        <authorList>
            <person name="Itoh T."/>
            <person name="Aiba H."/>
            <person name="Baba T."/>
            <person name="Fujita K."/>
            <person name="Hayashi K."/>
            <person name="Inada T."/>
            <person name="Isono K."/>
            <person name="Kasai H."/>
            <person name="Kimura S."/>
            <person name="Kitakawa M."/>
            <person name="Kitagawa M."/>
            <person name="Makino K."/>
            <person name="Miki T."/>
            <person name="Mizobuchi K."/>
            <person name="Mori H."/>
            <person name="Mori T."/>
            <person name="Motomura K."/>
            <person name="Nakade S."/>
            <person name="Nakamura Y."/>
            <person name="Nashimoto H."/>
            <person name="Nishio Y."/>
            <person name="Oshima T."/>
            <person name="Saito N."/>
            <person name="Sampei G."/>
            <person name="Seki Y."/>
            <person name="Sivasundaram S."/>
            <person name="Tagami H."/>
            <person name="Takeda J."/>
            <person name="Takemoto K."/>
            <person name="Wada C."/>
            <person name="Yamamoto Y."/>
            <person name="Horiuchi T."/>
        </authorList>
    </citation>
    <scope>NUCLEOTIDE SEQUENCE [LARGE SCALE GENOMIC DNA]</scope>
    <source>
        <strain>K12 / W3110 / ATCC 27325 / DSM 5911</strain>
    </source>
</reference>
<reference key="2">
    <citation type="journal article" date="1997" name="Science">
        <title>The complete genome sequence of Escherichia coli K-12.</title>
        <authorList>
            <person name="Blattner F.R."/>
            <person name="Plunkett G. III"/>
            <person name="Bloch C.A."/>
            <person name="Perna N.T."/>
            <person name="Burland V."/>
            <person name="Riley M."/>
            <person name="Collado-Vides J."/>
            <person name="Glasner J.D."/>
            <person name="Rode C.K."/>
            <person name="Mayhew G.F."/>
            <person name="Gregor J."/>
            <person name="Davis N.W."/>
            <person name="Kirkpatrick H.A."/>
            <person name="Goeden M.A."/>
            <person name="Rose D.J."/>
            <person name="Mau B."/>
            <person name="Shao Y."/>
        </authorList>
    </citation>
    <scope>NUCLEOTIDE SEQUENCE [LARGE SCALE GENOMIC DNA]</scope>
    <source>
        <strain>K12 / MG1655 / ATCC 47076</strain>
    </source>
</reference>
<reference key="3">
    <citation type="journal article" date="2006" name="Mol. Syst. Biol.">
        <title>Highly accurate genome sequences of Escherichia coli K-12 strains MG1655 and W3110.</title>
        <authorList>
            <person name="Hayashi K."/>
            <person name="Morooka N."/>
            <person name="Yamamoto Y."/>
            <person name="Fujita K."/>
            <person name="Isono K."/>
            <person name="Choi S."/>
            <person name="Ohtsubo E."/>
            <person name="Baba T."/>
            <person name="Wanner B.L."/>
            <person name="Mori H."/>
            <person name="Horiuchi T."/>
        </authorList>
    </citation>
    <scope>NUCLEOTIDE SEQUENCE [LARGE SCALE GENOMIC DNA]</scope>
    <source>
        <strain>K12 / W3110 / ATCC 27325 / DSM 5911</strain>
    </source>
</reference>
<reference key="4">
    <citation type="submission" date="1995-10" db="EMBL/GenBank/DDBJ databases">
        <authorList>
            <person name="Robison K."/>
            <person name="Estep P.E."/>
            <person name="O'Keeffe T."/>
            <person name="Church G.M."/>
        </authorList>
    </citation>
    <scope>NUCLEOTIDE SEQUENCE [GENOMIC DNA] OF 1-596</scope>
    <source>
        <strain>K12 / EMG2</strain>
    </source>
</reference>
<reference key="5">
    <citation type="journal article" date="1990" name="J. Bacteriol.">
        <title>RcsB and RcsC: a two-component regulator of capsule synthesis in Escherichia coli.</title>
        <authorList>
            <person name="Stout V."/>
            <person name="Gottesman S."/>
        </authorList>
    </citation>
    <scope>NUCLEOTIDE SEQUENCE [GENOMIC DNA] OF 593-890</scope>
    <source>
        <strain>K12</strain>
    </source>
</reference>
<reference key="6">
    <citation type="journal article" date="1994" name="Nucleic Acids Res.">
        <title>Intrinsic and extrinsic approaches for detecting genes in a bacterial genome.</title>
        <authorList>
            <person name="Borodovsky M."/>
            <person name="Rudd K.E."/>
            <person name="Koonin E.V."/>
        </authorList>
    </citation>
    <scope>IDENTIFICATION</scope>
</reference>
<reference key="7">
    <citation type="journal article" date="1999" name="Mol. Microbiol.">
        <title>Regulation of Escherichia coli cell division genes ftsA and ftsZ by the two-component system rcsC-rcsB.</title>
        <authorList>
            <person name="Carballes F."/>
            <person name="Bertrand C."/>
            <person name="Bouche J.P."/>
            <person name="Cam K."/>
        </authorList>
    </citation>
    <scope>FUNCTION</scope>
</reference>
<reference key="8">
    <citation type="journal article" date="2001" name="Biosci. Biotechnol. Biochem.">
        <title>Characterization of the RcsC-&gt;YojN-&gt;RcsB phosphorelay signaling pathway involved in capsular synthesis in Escherichia coli.</title>
        <authorList>
            <person name="Chen M.H."/>
            <person name="Takeda S."/>
            <person name="Yamada H."/>
            <person name="Ishii Y."/>
            <person name="Yamashino T."/>
            <person name="Mizuno T."/>
        </authorList>
    </citation>
    <scope>FUNCTION</scope>
    <scope>PHOSPHORELAY</scope>
</reference>
<reference key="9">
    <citation type="journal article" date="2001" name="Mol. Microbiol.">
        <title>A novel feature of the multistep phosphorelay in Escherichia coli: a revised model of the RcsC-&gt;YojN-&gt;RcsB signalling pathway implicated in capsular synthesis and swarming behaviour.</title>
        <authorList>
            <person name="Takeda S.-H."/>
            <person name="Fujisawa Y."/>
            <person name="Matsubara M."/>
            <person name="Aiba H."/>
            <person name="Mizuno T."/>
        </authorList>
    </citation>
    <scope>FUNCTION</scope>
    <scope>PHOSPHORYLATION AT HIS-842</scope>
    <scope>PHOSPHORELAY</scope>
    <scope>SUBCELLULAR LOCATION</scope>
    <scope>MUTAGENESIS OF HIS-842</scope>
    <source>
        <strain>K12</strain>
    </source>
</reference>
<reference key="10">
    <citation type="journal article" date="2003" name="J. Bacteriol.">
        <title>Genome-wide analyses revealing a signaling network of the RcsC-YojN-RcsB phosphorelay system in Escherichia coli.</title>
        <authorList>
            <person name="Hagiwara D."/>
            <person name="Sugiura M."/>
            <person name="Oshima T."/>
            <person name="Mori H."/>
            <person name="Aiba H."/>
            <person name="Yamashino T."/>
            <person name="Mizuno T."/>
        </authorList>
    </citation>
    <scope>FUNCTION</scope>
    <source>
        <strain>K12 / ST001</strain>
    </source>
</reference>
<reference key="11">
    <citation type="journal article" date="2003" name="Mol. Microbiol.">
        <title>The RcsC sensor kinase is required for normal biofilm formation in Escherichia coli K-12 and controls the expression of a regulon in response to growth on a solid surface.</title>
        <authorList>
            <person name="Ferrieres L."/>
            <person name="Clarke D.J."/>
        </authorList>
    </citation>
    <scope>FUNCTION</scope>
    <source>
        <strain>K12</strain>
    </source>
</reference>
<reference key="12">
    <citation type="journal article" date="2004" name="J. Mol. Biol.">
        <title>Solution structure of the Escherichia coli YojN histidine-phosphotransferase domain and its interaction with cognate phosphoryl receiver domains.</title>
        <authorList>
            <person name="Rogov V.V."/>
            <person name="Bernhard F."/>
            <person name="Loehr F."/>
            <person name="Doetsch V."/>
        </authorList>
    </citation>
    <scope>STRUCTURE BY NMR OF 775-890</scope>
    <scope>INTERACTION WITH RCSC AND RCSB</scope>
</reference>